<dbReference type="EMBL" id="U06427">
    <property type="protein sequence ID" value="AAA21485.1"/>
    <property type="molecule type" value="Genomic_DNA"/>
</dbReference>
<dbReference type="SMR" id="Q34028"/>
<dbReference type="Proteomes" id="UP000694950">
    <property type="component" value="Mitochondrion MT"/>
</dbReference>
<dbReference type="GO" id="GO:0005743">
    <property type="term" value="C:mitochondrial inner membrane"/>
    <property type="evidence" value="ECO:0007669"/>
    <property type="project" value="UniProtKB-SubCell"/>
</dbReference>
<dbReference type="GO" id="GO:0045275">
    <property type="term" value="C:respiratory chain complex III"/>
    <property type="evidence" value="ECO:0007669"/>
    <property type="project" value="InterPro"/>
</dbReference>
<dbReference type="GO" id="GO:0046872">
    <property type="term" value="F:metal ion binding"/>
    <property type="evidence" value="ECO:0007669"/>
    <property type="project" value="UniProtKB-KW"/>
</dbReference>
<dbReference type="GO" id="GO:0008121">
    <property type="term" value="F:ubiquinol-cytochrome-c reductase activity"/>
    <property type="evidence" value="ECO:0007669"/>
    <property type="project" value="InterPro"/>
</dbReference>
<dbReference type="GO" id="GO:0006122">
    <property type="term" value="P:mitochondrial electron transport, ubiquinol to cytochrome c"/>
    <property type="evidence" value="ECO:0007669"/>
    <property type="project" value="TreeGrafter"/>
</dbReference>
<dbReference type="CDD" id="cd00290">
    <property type="entry name" value="cytochrome_b_C"/>
    <property type="match status" value="1"/>
</dbReference>
<dbReference type="CDD" id="cd00284">
    <property type="entry name" value="Cytochrome_b_N"/>
    <property type="match status" value="1"/>
</dbReference>
<dbReference type="FunFam" id="1.20.810.10:FF:000002">
    <property type="entry name" value="Cytochrome b"/>
    <property type="match status" value="1"/>
</dbReference>
<dbReference type="Gene3D" id="1.20.810.10">
    <property type="entry name" value="Cytochrome Bc1 Complex, Chain C"/>
    <property type="match status" value="1"/>
</dbReference>
<dbReference type="InterPro" id="IPR005798">
    <property type="entry name" value="Cyt_b/b6_C"/>
</dbReference>
<dbReference type="InterPro" id="IPR036150">
    <property type="entry name" value="Cyt_b/b6_C_sf"/>
</dbReference>
<dbReference type="InterPro" id="IPR005797">
    <property type="entry name" value="Cyt_b/b6_N"/>
</dbReference>
<dbReference type="InterPro" id="IPR027387">
    <property type="entry name" value="Cytb/b6-like_sf"/>
</dbReference>
<dbReference type="InterPro" id="IPR030689">
    <property type="entry name" value="Cytochrome_b"/>
</dbReference>
<dbReference type="InterPro" id="IPR048260">
    <property type="entry name" value="Cytochrome_b_C_euk/bac"/>
</dbReference>
<dbReference type="InterPro" id="IPR048259">
    <property type="entry name" value="Cytochrome_b_N_euk/bac"/>
</dbReference>
<dbReference type="InterPro" id="IPR016174">
    <property type="entry name" value="Di-haem_cyt_TM"/>
</dbReference>
<dbReference type="PANTHER" id="PTHR19271">
    <property type="entry name" value="CYTOCHROME B"/>
    <property type="match status" value="1"/>
</dbReference>
<dbReference type="PANTHER" id="PTHR19271:SF16">
    <property type="entry name" value="CYTOCHROME B"/>
    <property type="match status" value="1"/>
</dbReference>
<dbReference type="Pfam" id="PF00032">
    <property type="entry name" value="Cytochrom_B_C"/>
    <property type="match status" value="1"/>
</dbReference>
<dbReference type="Pfam" id="PF00033">
    <property type="entry name" value="Cytochrome_B"/>
    <property type="match status" value="1"/>
</dbReference>
<dbReference type="PIRSF" id="PIRSF038885">
    <property type="entry name" value="COB"/>
    <property type="match status" value="1"/>
</dbReference>
<dbReference type="SUPFAM" id="SSF81648">
    <property type="entry name" value="a domain/subunit of cytochrome bc1 complex (Ubiquinol-cytochrome c reductase)"/>
    <property type="match status" value="1"/>
</dbReference>
<dbReference type="SUPFAM" id="SSF81342">
    <property type="entry name" value="Transmembrane di-heme cytochromes"/>
    <property type="match status" value="1"/>
</dbReference>
<dbReference type="PROSITE" id="PS51003">
    <property type="entry name" value="CYTB_CTER"/>
    <property type="match status" value="1"/>
</dbReference>
<dbReference type="PROSITE" id="PS51002">
    <property type="entry name" value="CYTB_NTER"/>
    <property type="match status" value="1"/>
</dbReference>
<proteinExistence type="inferred from homology"/>
<gene>
    <name type="primary">MT-CYB</name>
    <name type="synonym">COB</name>
    <name type="synonym">CYTB</name>
    <name type="synonym">MTCYB</name>
</gene>
<organism>
    <name type="scientific">Camelus bactrianus</name>
    <name type="common">Bactrian camel</name>
    <dbReference type="NCBI Taxonomy" id="9837"/>
    <lineage>
        <taxon>Eukaryota</taxon>
        <taxon>Metazoa</taxon>
        <taxon>Chordata</taxon>
        <taxon>Craniata</taxon>
        <taxon>Vertebrata</taxon>
        <taxon>Euteleostomi</taxon>
        <taxon>Mammalia</taxon>
        <taxon>Eutheria</taxon>
        <taxon>Laurasiatheria</taxon>
        <taxon>Artiodactyla</taxon>
        <taxon>Tylopoda</taxon>
        <taxon>Camelidae</taxon>
        <taxon>Camelus</taxon>
    </lineage>
</organism>
<name>CYB_CAMBA</name>
<evidence type="ECO:0000250" key="1"/>
<evidence type="ECO:0000250" key="2">
    <source>
        <dbReference type="UniProtKB" id="P00157"/>
    </source>
</evidence>
<evidence type="ECO:0000255" key="3">
    <source>
        <dbReference type="PROSITE-ProRule" id="PRU00967"/>
    </source>
</evidence>
<evidence type="ECO:0000255" key="4">
    <source>
        <dbReference type="PROSITE-ProRule" id="PRU00968"/>
    </source>
</evidence>
<keyword id="KW-0249">Electron transport</keyword>
<keyword id="KW-0349">Heme</keyword>
<keyword id="KW-0408">Iron</keyword>
<keyword id="KW-0472">Membrane</keyword>
<keyword id="KW-0479">Metal-binding</keyword>
<keyword id="KW-0496">Mitochondrion</keyword>
<keyword id="KW-0999">Mitochondrion inner membrane</keyword>
<keyword id="KW-1185">Reference proteome</keyword>
<keyword id="KW-0679">Respiratory chain</keyword>
<keyword id="KW-0812">Transmembrane</keyword>
<keyword id="KW-1133">Transmembrane helix</keyword>
<keyword id="KW-0813">Transport</keyword>
<keyword id="KW-0830">Ubiquinone</keyword>
<sequence>MTNIRKSHPLLKIMNDAFIDLPAPSNISSWWNFGSLLGVCLIMQILTGLFLAMHYTSDTTTAFSSVAHICRDVNYGWIIRYLHANGASMFFICLYIHVGRGLYYGSYTFLETWNVGIILLFTVMATAFMGYVLPWGQMSFWGATVITNLLSAIPYIGTTLVEWIWGGFSVDKATLTRFFAFHFILPFIITALVAVHLLFLHETGSNNPTGISSDMDKIPFHPYYTIKDILGALLLMLILLILVLFSPDLLGDPDNYTPANPLNTPPHIKPEWYFLFAYAILRSIPNKLGGVLALILSILILALIPMLHTSKQRSMMFRPISQCLFWVLVADLLTLTWIGGQPVEPPFIMIGQVASILYFSLILILMPVAGIIENRILKW</sequence>
<feature type="chain" id="PRO_0000060711" description="Cytochrome b">
    <location>
        <begin position="1"/>
        <end position="379"/>
    </location>
</feature>
<feature type="transmembrane region" description="Helical" evidence="2">
    <location>
        <begin position="33"/>
        <end position="53"/>
    </location>
</feature>
<feature type="transmembrane region" description="Helical" evidence="2">
    <location>
        <begin position="77"/>
        <end position="98"/>
    </location>
</feature>
<feature type="transmembrane region" description="Helical" evidence="2">
    <location>
        <begin position="113"/>
        <end position="133"/>
    </location>
</feature>
<feature type="transmembrane region" description="Helical" evidence="2">
    <location>
        <begin position="178"/>
        <end position="198"/>
    </location>
</feature>
<feature type="transmembrane region" description="Helical" evidence="2">
    <location>
        <begin position="226"/>
        <end position="246"/>
    </location>
</feature>
<feature type="transmembrane region" description="Helical" evidence="2">
    <location>
        <begin position="288"/>
        <end position="308"/>
    </location>
</feature>
<feature type="transmembrane region" description="Helical" evidence="2">
    <location>
        <begin position="320"/>
        <end position="340"/>
    </location>
</feature>
<feature type="transmembrane region" description="Helical" evidence="2">
    <location>
        <begin position="347"/>
        <end position="367"/>
    </location>
</feature>
<feature type="binding site" description="axial binding residue" evidence="2">
    <location>
        <position position="83"/>
    </location>
    <ligand>
        <name>heme b</name>
        <dbReference type="ChEBI" id="CHEBI:60344"/>
        <label>b562</label>
    </ligand>
    <ligandPart>
        <name>Fe</name>
        <dbReference type="ChEBI" id="CHEBI:18248"/>
    </ligandPart>
</feature>
<feature type="binding site" description="axial binding residue" evidence="2">
    <location>
        <position position="97"/>
    </location>
    <ligand>
        <name>heme b</name>
        <dbReference type="ChEBI" id="CHEBI:60344"/>
        <label>b566</label>
    </ligand>
    <ligandPart>
        <name>Fe</name>
        <dbReference type="ChEBI" id="CHEBI:18248"/>
    </ligandPart>
</feature>
<feature type="binding site" description="axial binding residue" evidence="2">
    <location>
        <position position="182"/>
    </location>
    <ligand>
        <name>heme b</name>
        <dbReference type="ChEBI" id="CHEBI:60344"/>
        <label>b562</label>
    </ligand>
    <ligandPart>
        <name>Fe</name>
        <dbReference type="ChEBI" id="CHEBI:18248"/>
    </ligandPart>
</feature>
<feature type="binding site" description="axial binding residue" evidence="2">
    <location>
        <position position="196"/>
    </location>
    <ligand>
        <name>heme b</name>
        <dbReference type="ChEBI" id="CHEBI:60344"/>
        <label>b566</label>
    </ligand>
    <ligandPart>
        <name>Fe</name>
        <dbReference type="ChEBI" id="CHEBI:18248"/>
    </ligandPart>
</feature>
<feature type="binding site" evidence="2">
    <location>
        <position position="201"/>
    </location>
    <ligand>
        <name>a ubiquinone</name>
        <dbReference type="ChEBI" id="CHEBI:16389"/>
    </ligand>
</feature>
<geneLocation type="mitochondrion"/>
<comment type="function">
    <text evidence="2">Component of the ubiquinol-cytochrome c reductase complex (complex III or cytochrome b-c1 complex) that is part of the mitochondrial respiratory chain. The b-c1 complex mediates electron transfer from ubiquinol to cytochrome c. Contributes to the generation of a proton gradient across the mitochondrial membrane that is then used for ATP synthesis.</text>
</comment>
<comment type="cofactor">
    <cofactor evidence="2">
        <name>heme b</name>
        <dbReference type="ChEBI" id="CHEBI:60344"/>
    </cofactor>
    <text evidence="2">Binds 2 heme b groups non-covalently.</text>
</comment>
<comment type="subunit">
    <text evidence="2">The cytochrome bc1 complex contains 11 subunits: 3 respiratory subunits (MT-CYB, CYC1 and UQCRFS1), 2 core proteins (UQCRC1 and UQCRC2) and 6 low-molecular weight proteins (UQCRH/QCR6, UQCRB/QCR7, UQCRQ/QCR8, UQCR10/QCR9, UQCR11/QCR10 and a cleavage product of UQCRFS1). This cytochrome bc1 complex then forms a dimer.</text>
</comment>
<comment type="subcellular location">
    <subcellularLocation>
        <location evidence="2">Mitochondrion inner membrane</location>
        <topology evidence="2">Multi-pass membrane protein</topology>
    </subcellularLocation>
</comment>
<comment type="miscellaneous">
    <text evidence="1">Heme 1 (or BL or b562) is low-potential and absorbs at about 562 nm, and heme 2 (or BH or b566) is high-potential and absorbs at about 566 nm.</text>
</comment>
<comment type="similarity">
    <text evidence="3 4">Belongs to the cytochrome b family.</text>
</comment>
<comment type="caution">
    <text evidence="2">The full-length protein contains only eight transmembrane helices, not nine as predicted by bioinformatics tools.</text>
</comment>
<accession>Q34028</accession>
<reference key="1">
    <citation type="journal article" date="1994" name="Proc. R. Soc. B">
        <title>Molecular evolution of the family Camelidae: a mitochondrial DNA study.</title>
        <authorList>
            <person name="Stanley H.F."/>
            <person name="Kadwell M."/>
            <person name="Wheeler J.C."/>
        </authorList>
    </citation>
    <scope>NUCLEOTIDE SEQUENCE [GENOMIC DNA]</scope>
</reference>
<protein>
    <recommendedName>
        <fullName>Cytochrome b</fullName>
    </recommendedName>
    <alternativeName>
        <fullName>Complex III subunit 3</fullName>
    </alternativeName>
    <alternativeName>
        <fullName>Complex III subunit III</fullName>
    </alternativeName>
    <alternativeName>
        <fullName>Cytochrome b-c1 complex subunit 3</fullName>
    </alternativeName>
    <alternativeName>
        <fullName>Ubiquinol-cytochrome-c reductase complex cytochrome b subunit</fullName>
    </alternativeName>
</protein>